<name>PCKA_NITHX</name>
<organism>
    <name type="scientific">Nitrobacter hamburgensis (strain DSM 10229 / NCIMB 13809 / X14)</name>
    <dbReference type="NCBI Taxonomy" id="323097"/>
    <lineage>
        <taxon>Bacteria</taxon>
        <taxon>Pseudomonadati</taxon>
        <taxon>Pseudomonadota</taxon>
        <taxon>Alphaproteobacteria</taxon>
        <taxon>Hyphomicrobiales</taxon>
        <taxon>Nitrobacteraceae</taxon>
        <taxon>Nitrobacter</taxon>
    </lineage>
</organism>
<feature type="chain" id="PRO_1000026332" description="Phosphoenolpyruvate carboxykinase (ATP)">
    <location>
        <begin position="1"/>
        <end position="538"/>
    </location>
</feature>
<feature type="binding site" evidence="1">
    <location>
        <position position="61"/>
    </location>
    <ligand>
        <name>substrate</name>
    </ligand>
</feature>
<feature type="binding site" evidence="1">
    <location>
        <position position="195"/>
    </location>
    <ligand>
        <name>substrate</name>
    </ligand>
</feature>
<feature type="binding site" evidence="1">
    <location>
        <position position="201"/>
    </location>
    <ligand>
        <name>ATP</name>
        <dbReference type="ChEBI" id="CHEBI:30616"/>
    </ligand>
</feature>
<feature type="binding site" evidence="1">
    <location>
        <position position="201"/>
    </location>
    <ligand>
        <name>Mn(2+)</name>
        <dbReference type="ChEBI" id="CHEBI:29035"/>
    </ligand>
</feature>
<feature type="binding site" evidence="1">
    <location>
        <position position="201"/>
    </location>
    <ligand>
        <name>substrate</name>
    </ligand>
</feature>
<feature type="binding site" evidence="1">
    <location>
        <position position="220"/>
    </location>
    <ligand>
        <name>ATP</name>
        <dbReference type="ChEBI" id="CHEBI:30616"/>
    </ligand>
</feature>
<feature type="binding site" evidence="1">
    <location>
        <position position="220"/>
    </location>
    <ligand>
        <name>Mn(2+)</name>
        <dbReference type="ChEBI" id="CHEBI:29035"/>
    </ligand>
</feature>
<feature type="binding site" evidence="1">
    <location>
        <begin position="236"/>
        <end position="244"/>
    </location>
    <ligand>
        <name>ATP</name>
        <dbReference type="ChEBI" id="CHEBI:30616"/>
    </ligand>
</feature>
<feature type="binding site" evidence="1">
    <location>
        <position position="257"/>
    </location>
    <ligand>
        <name>Mn(2+)</name>
        <dbReference type="ChEBI" id="CHEBI:29035"/>
    </ligand>
</feature>
<feature type="binding site" evidence="1">
    <location>
        <position position="285"/>
    </location>
    <ligand>
        <name>ATP</name>
        <dbReference type="ChEBI" id="CHEBI:30616"/>
    </ligand>
</feature>
<feature type="binding site" evidence="1">
    <location>
        <position position="323"/>
    </location>
    <ligand>
        <name>ATP</name>
        <dbReference type="ChEBI" id="CHEBI:30616"/>
    </ligand>
</feature>
<feature type="binding site" evidence="1">
    <location>
        <position position="323"/>
    </location>
    <ligand>
        <name>substrate</name>
    </ligand>
</feature>
<feature type="binding site" evidence="1">
    <location>
        <position position="449"/>
    </location>
    <ligand>
        <name>ATP</name>
        <dbReference type="ChEBI" id="CHEBI:30616"/>
    </ligand>
</feature>
<comment type="function">
    <text evidence="1">Involved in the gluconeogenesis. Catalyzes the conversion of oxaloacetate (OAA) to phosphoenolpyruvate (PEP) through direct phosphoryl transfer between the nucleoside triphosphate and OAA.</text>
</comment>
<comment type="catalytic activity">
    <reaction evidence="1">
        <text>oxaloacetate + ATP = phosphoenolpyruvate + ADP + CO2</text>
        <dbReference type="Rhea" id="RHEA:18617"/>
        <dbReference type="ChEBI" id="CHEBI:16452"/>
        <dbReference type="ChEBI" id="CHEBI:16526"/>
        <dbReference type="ChEBI" id="CHEBI:30616"/>
        <dbReference type="ChEBI" id="CHEBI:58702"/>
        <dbReference type="ChEBI" id="CHEBI:456216"/>
        <dbReference type="EC" id="4.1.1.49"/>
    </reaction>
</comment>
<comment type="cofactor">
    <cofactor evidence="1">
        <name>Mn(2+)</name>
        <dbReference type="ChEBI" id="CHEBI:29035"/>
    </cofactor>
    <text evidence="1">Binds 1 Mn(2+) ion per subunit.</text>
</comment>
<comment type="pathway">
    <text evidence="1">Carbohydrate biosynthesis; gluconeogenesis.</text>
</comment>
<comment type="subcellular location">
    <subcellularLocation>
        <location evidence="1">Cytoplasm</location>
    </subcellularLocation>
</comment>
<comment type="similarity">
    <text evidence="1">Belongs to the phosphoenolpyruvate carboxykinase (ATP) family.</text>
</comment>
<dbReference type="EC" id="4.1.1.49" evidence="1"/>
<dbReference type="EMBL" id="CP000319">
    <property type="protein sequence ID" value="ABE61335.1"/>
    <property type="molecule type" value="Genomic_DNA"/>
</dbReference>
<dbReference type="RefSeq" id="WP_011509039.1">
    <property type="nucleotide sequence ID" value="NC_007964.1"/>
</dbReference>
<dbReference type="SMR" id="Q1QR12"/>
<dbReference type="STRING" id="323097.Nham_0445"/>
<dbReference type="KEGG" id="nha:Nham_0445"/>
<dbReference type="eggNOG" id="COG1866">
    <property type="taxonomic scope" value="Bacteria"/>
</dbReference>
<dbReference type="HOGENOM" id="CLU_018247_0_1_5"/>
<dbReference type="OrthoDB" id="9806325at2"/>
<dbReference type="UniPathway" id="UPA00138"/>
<dbReference type="Proteomes" id="UP000001953">
    <property type="component" value="Chromosome"/>
</dbReference>
<dbReference type="GO" id="GO:0005829">
    <property type="term" value="C:cytosol"/>
    <property type="evidence" value="ECO:0007669"/>
    <property type="project" value="TreeGrafter"/>
</dbReference>
<dbReference type="GO" id="GO:0005524">
    <property type="term" value="F:ATP binding"/>
    <property type="evidence" value="ECO:0007669"/>
    <property type="project" value="UniProtKB-UniRule"/>
</dbReference>
<dbReference type="GO" id="GO:0046872">
    <property type="term" value="F:metal ion binding"/>
    <property type="evidence" value="ECO:0007669"/>
    <property type="project" value="UniProtKB-KW"/>
</dbReference>
<dbReference type="GO" id="GO:0004612">
    <property type="term" value="F:phosphoenolpyruvate carboxykinase (ATP) activity"/>
    <property type="evidence" value="ECO:0007669"/>
    <property type="project" value="UniProtKB-UniRule"/>
</dbReference>
<dbReference type="GO" id="GO:0006094">
    <property type="term" value="P:gluconeogenesis"/>
    <property type="evidence" value="ECO:0007669"/>
    <property type="project" value="UniProtKB-UniRule"/>
</dbReference>
<dbReference type="CDD" id="cd00484">
    <property type="entry name" value="PEPCK_ATP"/>
    <property type="match status" value="1"/>
</dbReference>
<dbReference type="FunFam" id="2.170.8.10:FF:000001">
    <property type="entry name" value="Phosphoenolpyruvate carboxykinase (ATP)"/>
    <property type="match status" value="1"/>
</dbReference>
<dbReference type="Gene3D" id="3.90.228.20">
    <property type="match status" value="1"/>
</dbReference>
<dbReference type="Gene3D" id="3.40.449.10">
    <property type="entry name" value="Phosphoenolpyruvate Carboxykinase, domain 1"/>
    <property type="match status" value="1"/>
</dbReference>
<dbReference type="Gene3D" id="2.170.8.10">
    <property type="entry name" value="Phosphoenolpyruvate Carboxykinase, domain 2"/>
    <property type="match status" value="1"/>
</dbReference>
<dbReference type="HAMAP" id="MF_00453">
    <property type="entry name" value="PEPCK_ATP"/>
    <property type="match status" value="1"/>
</dbReference>
<dbReference type="InterPro" id="IPR001272">
    <property type="entry name" value="PEP_carboxykinase_ATP"/>
</dbReference>
<dbReference type="InterPro" id="IPR013035">
    <property type="entry name" value="PEP_carboxykinase_C"/>
</dbReference>
<dbReference type="InterPro" id="IPR008210">
    <property type="entry name" value="PEP_carboxykinase_N"/>
</dbReference>
<dbReference type="InterPro" id="IPR015994">
    <property type="entry name" value="PEPCK_ATP_CS"/>
</dbReference>
<dbReference type="NCBIfam" id="TIGR00224">
    <property type="entry name" value="pckA"/>
    <property type="match status" value="1"/>
</dbReference>
<dbReference type="NCBIfam" id="NF006820">
    <property type="entry name" value="PRK09344.1-2"/>
    <property type="match status" value="1"/>
</dbReference>
<dbReference type="NCBIfam" id="NF006821">
    <property type="entry name" value="PRK09344.1-3"/>
    <property type="match status" value="1"/>
</dbReference>
<dbReference type="NCBIfam" id="NF006822">
    <property type="entry name" value="PRK09344.1-4"/>
    <property type="match status" value="1"/>
</dbReference>
<dbReference type="PANTHER" id="PTHR30031:SF0">
    <property type="entry name" value="PHOSPHOENOLPYRUVATE CARBOXYKINASE (ATP)"/>
    <property type="match status" value="1"/>
</dbReference>
<dbReference type="PANTHER" id="PTHR30031">
    <property type="entry name" value="PHOSPHOENOLPYRUVATE CARBOXYKINASE ATP"/>
    <property type="match status" value="1"/>
</dbReference>
<dbReference type="Pfam" id="PF01293">
    <property type="entry name" value="PEPCK_ATP"/>
    <property type="match status" value="1"/>
</dbReference>
<dbReference type="PIRSF" id="PIRSF006294">
    <property type="entry name" value="PEP_crbxkin"/>
    <property type="match status" value="1"/>
</dbReference>
<dbReference type="SUPFAM" id="SSF68923">
    <property type="entry name" value="PEP carboxykinase N-terminal domain"/>
    <property type="match status" value="1"/>
</dbReference>
<dbReference type="SUPFAM" id="SSF53795">
    <property type="entry name" value="PEP carboxykinase-like"/>
    <property type="match status" value="1"/>
</dbReference>
<dbReference type="PROSITE" id="PS00532">
    <property type="entry name" value="PEPCK_ATP"/>
    <property type="match status" value="1"/>
</dbReference>
<reference key="1">
    <citation type="submission" date="2006-03" db="EMBL/GenBank/DDBJ databases">
        <title>Complete sequence of chromosome of Nitrobacter hamburgensis X14.</title>
        <authorList>
            <consortium name="US DOE Joint Genome Institute"/>
            <person name="Copeland A."/>
            <person name="Lucas S."/>
            <person name="Lapidus A."/>
            <person name="Barry K."/>
            <person name="Detter J.C."/>
            <person name="Glavina del Rio T."/>
            <person name="Hammon N."/>
            <person name="Israni S."/>
            <person name="Dalin E."/>
            <person name="Tice H."/>
            <person name="Pitluck S."/>
            <person name="Chain P."/>
            <person name="Malfatti S."/>
            <person name="Shin M."/>
            <person name="Vergez L."/>
            <person name="Schmutz J."/>
            <person name="Larimer F."/>
            <person name="Land M."/>
            <person name="Hauser L."/>
            <person name="Kyrpides N."/>
            <person name="Ivanova N."/>
            <person name="Ward B."/>
            <person name="Arp D."/>
            <person name="Klotz M."/>
            <person name="Stein L."/>
            <person name="O'Mullan G."/>
            <person name="Starkenburg S."/>
            <person name="Sayavedra L."/>
            <person name="Poret-Peterson A.T."/>
            <person name="Gentry M.E."/>
            <person name="Bruce D."/>
            <person name="Richardson P."/>
        </authorList>
    </citation>
    <scope>NUCLEOTIDE SEQUENCE [LARGE SCALE GENOMIC DNA]</scope>
    <source>
        <strain>DSM 10229 / NCIMB 13809 / X14</strain>
    </source>
</reference>
<gene>
    <name evidence="1" type="primary">pckA</name>
    <name type="ordered locus">Nham_0445</name>
</gene>
<proteinExistence type="inferred from homology"/>
<evidence type="ECO:0000255" key="1">
    <source>
        <dbReference type="HAMAP-Rule" id="MF_00453"/>
    </source>
</evidence>
<protein>
    <recommendedName>
        <fullName evidence="1">Phosphoenolpyruvate carboxykinase (ATP)</fullName>
        <shortName evidence="1">PCK</shortName>
        <shortName evidence="1">PEP carboxykinase</shortName>
        <shortName evidence="1">PEPCK</shortName>
        <ecNumber evidence="1">4.1.1.49</ecNumber>
    </recommendedName>
</protein>
<sequence length="538" mass="58927">MPETGVRNGAFGADKFGLKNLEAVYWNFGAPQLYEHALRKGEAMVNADGALCADTGVFTGRSPKDKFTVRDATTDQSVWWAGNQSITPEQFAALYADFLDHAEGMTLFAQDLYGGADPNFRIPTRVFTELAWHSLFIRTLLRRPDTSELAGFVPELTVIDLPSFRADPERHGVRSENVVAIDFVRKIILIGGSHYAGEMKKSIFTTLNYYLPDNGVLPMHCSANVGPEGDSTIFFGLSGTGKTTLSADPKRTLIGDDEHGWSKEGIFNFEGGCYAKCIKLSQEAEPEIYAASKRFGAVLENVVHDESTRVPDFDDGSKTENTRSAYPLEFIPNASLTGRAGQPKNLVMLAADAFGVLPPIARLTPAQAMYHFLSGYTAKVAGTERGLGNEPQPEFSTCFGSPFLPRDPSVYGNMLRELIARHNVDCWLVNTGWTGGKYGTGRRMPIKVTRALLGAALDGSLREVQFRTDRYFGFAVPTSVPGIEPHILDPIKTWADKAEFDKTACALVGMFQNNFTRFEGDVDAEVRAAAPEVRAAAE</sequence>
<keyword id="KW-0067">ATP-binding</keyword>
<keyword id="KW-0963">Cytoplasm</keyword>
<keyword id="KW-0210">Decarboxylase</keyword>
<keyword id="KW-0312">Gluconeogenesis</keyword>
<keyword id="KW-0456">Lyase</keyword>
<keyword id="KW-0464">Manganese</keyword>
<keyword id="KW-0479">Metal-binding</keyword>
<keyword id="KW-0547">Nucleotide-binding</keyword>
<keyword id="KW-1185">Reference proteome</keyword>
<accession>Q1QR12</accession>